<gene>
    <name type="primary">FDH1</name>
    <name evidence="8" type="synonym">FDH</name>
    <name type="ordered locus">At5g14780</name>
    <name type="ORF">T9L3_80</name>
</gene>
<dbReference type="EC" id="1.17.1.9" evidence="1 2 7"/>
<dbReference type="EMBL" id="AB023897">
    <property type="protein sequence ID" value="BAA88683.1"/>
    <property type="molecule type" value="mRNA"/>
</dbReference>
<dbReference type="EMBL" id="AF217195">
    <property type="protein sequence ID" value="AAF67100.1"/>
    <property type="molecule type" value="mRNA"/>
</dbReference>
<dbReference type="EMBL" id="AF208028">
    <property type="protein sequence ID" value="AAF19435.1"/>
    <property type="molecule type" value="mRNA"/>
</dbReference>
<dbReference type="EMBL" id="AF208029">
    <property type="protein sequence ID" value="AAF19436.1"/>
    <property type="molecule type" value="mRNA"/>
</dbReference>
<dbReference type="EMBL" id="AL391149">
    <property type="protein sequence ID" value="CAC01877.1"/>
    <property type="molecule type" value="Genomic_DNA"/>
</dbReference>
<dbReference type="EMBL" id="CP002688">
    <property type="protein sequence ID" value="AED92076.1"/>
    <property type="molecule type" value="Genomic_DNA"/>
</dbReference>
<dbReference type="EMBL" id="AY054285">
    <property type="protein sequence ID" value="AAL06944.1"/>
    <property type="molecule type" value="mRNA"/>
</dbReference>
<dbReference type="EMBL" id="AY039609">
    <property type="protein sequence ID" value="AAK62664.1"/>
    <property type="molecule type" value="mRNA"/>
</dbReference>
<dbReference type="EMBL" id="AY081734">
    <property type="protein sequence ID" value="AAL87387.1"/>
    <property type="molecule type" value="mRNA"/>
</dbReference>
<dbReference type="PIR" id="T51423">
    <property type="entry name" value="T51423"/>
</dbReference>
<dbReference type="RefSeq" id="NP_196982.1">
    <property type="nucleotide sequence ID" value="NM_121482.4"/>
</dbReference>
<dbReference type="PDB" id="3JTM">
    <property type="method" value="X-ray"/>
    <property type="resolution" value="1.30 A"/>
    <property type="chains" value="A=34-384"/>
</dbReference>
<dbReference type="PDB" id="3N7U">
    <property type="method" value="X-ray"/>
    <property type="resolution" value="2.00 A"/>
    <property type="chains" value="A/B/C/D/E/F/G/H/I/J/K/L=34-384"/>
</dbReference>
<dbReference type="PDB" id="3NAQ">
    <property type="method" value="X-ray"/>
    <property type="resolution" value="1.70 A"/>
    <property type="chains" value="A/B=28-384"/>
</dbReference>
<dbReference type="PDBsum" id="3JTM"/>
<dbReference type="PDBsum" id="3N7U"/>
<dbReference type="PDBsum" id="3NAQ"/>
<dbReference type="SMR" id="Q9S7E4"/>
<dbReference type="BioGRID" id="16607">
    <property type="interactions" value="8"/>
</dbReference>
<dbReference type="FunCoup" id="Q9S7E4">
    <property type="interactions" value="411"/>
</dbReference>
<dbReference type="IntAct" id="Q9S7E4">
    <property type="interactions" value="2"/>
</dbReference>
<dbReference type="STRING" id="3702.Q9S7E4"/>
<dbReference type="iPTMnet" id="Q9S7E4"/>
<dbReference type="PaxDb" id="3702-AT5G14780.1"/>
<dbReference type="ProteomicsDB" id="232074"/>
<dbReference type="EnsemblPlants" id="AT5G14780.1">
    <property type="protein sequence ID" value="AT5G14780.1"/>
    <property type="gene ID" value="AT5G14780"/>
</dbReference>
<dbReference type="GeneID" id="831330"/>
<dbReference type="Gramene" id="AT5G14780.1">
    <property type="protein sequence ID" value="AT5G14780.1"/>
    <property type="gene ID" value="AT5G14780"/>
</dbReference>
<dbReference type="KEGG" id="ath:AT5G14780"/>
<dbReference type="Araport" id="AT5G14780"/>
<dbReference type="TAIR" id="AT5G14780">
    <property type="gene designation" value="FDH"/>
</dbReference>
<dbReference type="eggNOG" id="KOG0069">
    <property type="taxonomic scope" value="Eukaryota"/>
</dbReference>
<dbReference type="HOGENOM" id="CLU_019796_0_0_1"/>
<dbReference type="InParanoid" id="Q9S7E4"/>
<dbReference type="OrthoDB" id="1621027at2759"/>
<dbReference type="PhylomeDB" id="Q9S7E4"/>
<dbReference type="BioCyc" id="ARA:AT5G14780-MONOMER"/>
<dbReference type="BioCyc" id="MetaCyc:AT5G14780-MONOMER"/>
<dbReference type="BRENDA" id="1.17.1.9">
    <property type="organism ID" value="399"/>
</dbReference>
<dbReference type="CD-CODE" id="4299E36E">
    <property type="entry name" value="Nucleolus"/>
</dbReference>
<dbReference type="EvolutionaryTrace" id="Q9S7E4"/>
<dbReference type="PRO" id="PR:Q9S7E4"/>
<dbReference type="Proteomes" id="UP000006548">
    <property type="component" value="Chromosome 5"/>
</dbReference>
<dbReference type="ExpressionAtlas" id="Q9S7E4">
    <property type="expression patterns" value="baseline and differential"/>
</dbReference>
<dbReference type="GO" id="GO:0009507">
    <property type="term" value="C:chloroplast"/>
    <property type="evidence" value="ECO:0007669"/>
    <property type="project" value="UniProtKB-SubCell"/>
</dbReference>
<dbReference type="GO" id="GO:0005829">
    <property type="term" value="C:cytosol"/>
    <property type="evidence" value="ECO:0007005"/>
    <property type="project" value="TAIR"/>
</dbReference>
<dbReference type="GO" id="GO:0005739">
    <property type="term" value="C:mitochondrion"/>
    <property type="evidence" value="ECO:0007005"/>
    <property type="project" value="TAIR"/>
</dbReference>
<dbReference type="GO" id="GO:0009536">
    <property type="term" value="C:plastid"/>
    <property type="evidence" value="ECO:0007005"/>
    <property type="project" value="TAIR"/>
</dbReference>
<dbReference type="GO" id="GO:0009579">
    <property type="term" value="C:thylakoid"/>
    <property type="evidence" value="ECO:0007005"/>
    <property type="project" value="TAIR"/>
</dbReference>
<dbReference type="GO" id="GO:0008863">
    <property type="term" value="F:formate dehydrogenase (NAD+) activity"/>
    <property type="evidence" value="ECO:0007669"/>
    <property type="project" value="UniProtKB-UniRule"/>
</dbReference>
<dbReference type="GO" id="GO:0051287">
    <property type="term" value="F:NAD binding"/>
    <property type="evidence" value="ECO:0007669"/>
    <property type="project" value="InterPro"/>
</dbReference>
<dbReference type="GO" id="GO:0016616">
    <property type="term" value="F:oxidoreductase activity, acting on the CH-OH group of donors, NAD or NADP as acceptor"/>
    <property type="evidence" value="ECO:0007669"/>
    <property type="project" value="InterPro"/>
</dbReference>
<dbReference type="GO" id="GO:0042183">
    <property type="term" value="P:formate catabolic process"/>
    <property type="evidence" value="ECO:0007669"/>
    <property type="project" value="UniProtKB-UniRule"/>
</dbReference>
<dbReference type="CDD" id="cd05302">
    <property type="entry name" value="FDH"/>
    <property type="match status" value="1"/>
</dbReference>
<dbReference type="FunFam" id="3.40.50.720:FF:000057">
    <property type="entry name" value="Formate dehydrogenase"/>
    <property type="match status" value="1"/>
</dbReference>
<dbReference type="FunFam" id="3.40.50.720:FF:000061">
    <property type="entry name" value="Formate dehydrogenase"/>
    <property type="match status" value="1"/>
</dbReference>
<dbReference type="Gene3D" id="3.40.50.720">
    <property type="entry name" value="NAD(P)-binding Rossmann-like Domain"/>
    <property type="match status" value="2"/>
</dbReference>
<dbReference type="HAMAP" id="MF_03210">
    <property type="entry name" value="Formate_dehydrogenase"/>
    <property type="match status" value="1"/>
</dbReference>
<dbReference type="InterPro" id="IPR006139">
    <property type="entry name" value="D-isomer_2_OHA_DH_cat_dom"/>
</dbReference>
<dbReference type="InterPro" id="IPR029753">
    <property type="entry name" value="D-isomer_DH_CS"/>
</dbReference>
<dbReference type="InterPro" id="IPR029752">
    <property type="entry name" value="D-isomer_DH_CS1"/>
</dbReference>
<dbReference type="InterPro" id="IPR006140">
    <property type="entry name" value="D-isomer_DH_NAD-bd"/>
</dbReference>
<dbReference type="InterPro" id="IPR033689">
    <property type="entry name" value="FDH_NAD-dep"/>
</dbReference>
<dbReference type="InterPro" id="IPR036291">
    <property type="entry name" value="NAD(P)-bd_dom_sf"/>
</dbReference>
<dbReference type="NCBIfam" id="NF005750">
    <property type="entry name" value="PRK07574.1"/>
    <property type="match status" value="1"/>
</dbReference>
<dbReference type="PANTHER" id="PTHR42938">
    <property type="entry name" value="FORMATE DEHYDROGENASE 1"/>
    <property type="match status" value="1"/>
</dbReference>
<dbReference type="PANTHER" id="PTHR42938:SF9">
    <property type="entry name" value="FORMATE DEHYDROGENASE 1"/>
    <property type="match status" value="1"/>
</dbReference>
<dbReference type="Pfam" id="PF00389">
    <property type="entry name" value="2-Hacid_dh"/>
    <property type="match status" value="1"/>
</dbReference>
<dbReference type="Pfam" id="PF02826">
    <property type="entry name" value="2-Hacid_dh_C"/>
    <property type="match status" value="1"/>
</dbReference>
<dbReference type="SUPFAM" id="SSF52283">
    <property type="entry name" value="Formate/glycerate dehydrogenase catalytic domain-like"/>
    <property type="match status" value="1"/>
</dbReference>
<dbReference type="SUPFAM" id="SSF51735">
    <property type="entry name" value="NAD(P)-binding Rossmann-fold domains"/>
    <property type="match status" value="1"/>
</dbReference>
<dbReference type="PROSITE" id="PS00065">
    <property type="entry name" value="D_2_HYDROXYACID_DH_1"/>
    <property type="match status" value="1"/>
</dbReference>
<dbReference type="PROSITE" id="PS00670">
    <property type="entry name" value="D_2_HYDROXYACID_DH_2"/>
    <property type="match status" value="1"/>
</dbReference>
<dbReference type="PROSITE" id="PS00671">
    <property type="entry name" value="D_2_HYDROXYACID_DH_3"/>
    <property type="match status" value="1"/>
</dbReference>
<evidence type="ECO:0000255" key="1">
    <source>
        <dbReference type="HAMAP-Rule" id="MF_03210"/>
    </source>
</evidence>
<evidence type="ECO:0000269" key="2">
    <source>
    </source>
</evidence>
<evidence type="ECO:0000269" key="3">
    <source>
    </source>
</evidence>
<evidence type="ECO:0000269" key="4">
    <source>
    </source>
</evidence>
<evidence type="ECO:0000269" key="5">
    <source ref="10"/>
</evidence>
<evidence type="ECO:0000269" key="6">
    <source ref="3"/>
</evidence>
<evidence type="ECO:0000269" key="7">
    <source ref="7"/>
</evidence>
<evidence type="ECO:0000303" key="8">
    <source ref="7"/>
</evidence>
<evidence type="ECO:0000305" key="9"/>
<evidence type="ECO:0007829" key="10">
    <source>
        <dbReference type="PDB" id="3JTM"/>
    </source>
</evidence>
<reference key="1">
    <citation type="journal article" date="2000" name="J. Biosci. Bioeng.">
        <title>Formate dehydrogenase gene of Arabidopsis thaliana is induced by formaldehyde and not by formic acid.</title>
        <authorList>
            <person name="Fukusaki E."/>
            <person name="Ikeda T."/>
            <person name="Shiraishi T."/>
            <person name="Nishikawa T."/>
            <person name="Kobayashi A."/>
        </authorList>
    </citation>
    <scope>NUCLEOTIDE SEQUENCE [MRNA]</scope>
    <scope>INDUCTION</scope>
</reference>
<reference key="2">
    <citation type="journal article" date="2000" name="Plant Sci.">
        <title>Formate dehydrogenase in Arabidopsis thaliana: characterization and possible targeting to the chloroplast.</title>
        <authorList>
            <person name="Olson B.J."/>
            <person name="Skavdahl M."/>
            <person name="Ramberg H."/>
            <person name="Osterman J.C."/>
            <person name="Markwell J."/>
        </authorList>
    </citation>
    <scope>NUCLEOTIDE SEQUENCE [MRNA]</scope>
    <scope>CATALYTIC ACTIVITY</scope>
    <scope>BIOPHYSICOCHEMICAL PROPERTIES</scope>
    <scope>SUBCELLULAR LOCATION</scope>
</reference>
<reference key="3">
    <citation type="journal article" date="2001" name="Can. J. Bot.">
        <title>Molecular characterization and regulation of formate dehydrogenase in Arabidopsis thaliana.</title>
        <authorList>
            <person name="Li R."/>
            <person name="Bonham-Smith P.C."/>
            <person name="King J."/>
        </authorList>
    </citation>
    <scope>NUCLEOTIDE SEQUENCE [MRNA]</scope>
    <scope>FUNCTION</scope>
    <scope>INDUCTION</scope>
</reference>
<reference key="4">
    <citation type="journal article" date="2000" name="Nature">
        <title>Sequence and analysis of chromosome 5 of the plant Arabidopsis thaliana.</title>
        <authorList>
            <person name="Tabata S."/>
            <person name="Kaneko T."/>
            <person name="Nakamura Y."/>
            <person name="Kotani H."/>
            <person name="Kato T."/>
            <person name="Asamizu E."/>
            <person name="Miyajima N."/>
            <person name="Sasamoto S."/>
            <person name="Kimura T."/>
            <person name="Hosouchi T."/>
            <person name="Kawashima K."/>
            <person name="Kohara M."/>
            <person name="Matsumoto M."/>
            <person name="Matsuno A."/>
            <person name="Muraki A."/>
            <person name="Nakayama S."/>
            <person name="Nakazaki N."/>
            <person name="Naruo K."/>
            <person name="Okumura S."/>
            <person name="Shinpo S."/>
            <person name="Takeuchi C."/>
            <person name="Wada T."/>
            <person name="Watanabe A."/>
            <person name="Yamada M."/>
            <person name="Yasuda M."/>
            <person name="Sato S."/>
            <person name="de la Bastide M."/>
            <person name="Huang E."/>
            <person name="Spiegel L."/>
            <person name="Gnoj L."/>
            <person name="O'Shaughnessy A."/>
            <person name="Preston R."/>
            <person name="Habermann K."/>
            <person name="Murray J."/>
            <person name="Johnson D."/>
            <person name="Rohlfing T."/>
            <person name="Nelson J."/>
            <person name="Stoneking T."/>
            <person name="Pepin K."/>
            <person name="Spieth J."/>
            <person name="Sekhon M."/>
            <person name="Armstrong J."/>
            <person name="Becker M."/>
            <person name="Belter E."/>
            <person name="Cordum H."/>
            <person name="Cordes M."/>
            <person name="Courtney L."/>
            <person name="Courtney W."/>
            <person name="Dante M."/>
            <person name="Du H."/>
            <person name="Edwards J."/>
            <person name="Fryman J."/>
            <person name="Haakensen B."/>
            <person name="Lamar E."/>
            <person name="Latreille P."/>
            <person name="Leonard S."/>
            <person name="Meyer R."/>
            <person name="Mulvaney E."/>
            <person name="Ozersky P."/>
            <person name="Riley A."/>
            <person name="Strowmatt C."/>
            <person name="Wagner-McPherson C."/>
            <person name="Wollam A."/>
            <person name="Yoakum M."/>
            <person name="Bell M."/>
            <person name="Dedhia N."/>
            <person name="Parnell L."/>
            <person name="Shah R."/>
            <person name="Rodriguez M."/>
            <person name="Hoon See L."/>
            <person name="Vil D."/>
            <person name="Baker J."/>
            <person name="Kirchoff K."/>
            <person name="Toth K."/>
            <person name="King L."/>
            <person name="Bahret A."/>
            <person name="Miller B."/>
            <person name="Marra M.A."/>
            <person name="Martienssen R."/>
            <person name="McCombie W.R."/>
            <person name="Wilson R.K."/>
            <person name="Murphy G."/>
            <person name="Bancroft I."/>
            <person name="Volckaert G."/>
            <person name="Wambutt R."/>
            <person name="Duesterhoeft A."/>
            <person name="Stiekema W."/>
            <person name="Pohl T."/>
            <person name="Entian K.-D."/>
            <person name="Terryn N."/>
            <person name="Hartley N."/>
            <person name="Bent E."/>
            <person name="Johnson S."/>
            <person name="Langham S.-A."/>
            <person name="McCullagh B."/>
            <person name="Robben J."/>
            <person name="Grymonprez B."/>
            <person name="Zimmermann W."/>
            <person name="Ramsperger U."/>
            <person name="Wedler H."/>
            <person name="Balke K."/>
            <person name="Wedler E."/>
            <person name="Peters S."/>
            <person name="van Staveren M."/>
            <person name="Dirkse W."/>
            <person name="Mooijman P."/>
            <person name="Klein Lankhorst R."/>
            <person name="Weitzenegger T."/>
            <person name="Bothe G."/>
            <person name="Rose M."/>
            <person name="Hauf J."/>
            <person name="Berneiser S."/>
            <person name="Hempel S."/>
            <person name="Feldpausch M."/>
            <person name="Lamberth S."/>
            <person name="Villarroel R."/>
            <person name="Gielen J."/>
            <person name="Ardiles W."/>
            <person name="Bents O."/>
            <person name="Lemcke K."/>
            <person name="Kolesov G."/>
            <person name="Mayer K.F.X."/>
            <person name="Rudd S."/>
            <person name="Schoof H."/>
            <person name="Schueller C."/>
            <person name="Zaccaria P."/>
            <person name="Mewes H.-W."/>
            <person name="Bevan M."/>
            <person name="Fransz P.F."/>
        </authorList>
    </citation>
    <scope>NUCLEOTIDE SEQUENCE [LARGE SCALE GENOMIC DNA]</scope>
    <source>
        <strain>cv. Columbia</strain>
    </source>
</reference>
<reference key="5">
    <citation type="journal article" date="2017" name="Plant J.">
        <title>Araport11: a complete reannotation of the Arabidopsis thaliana reference genome.</title>
        <authorList>
            <person name="Cheng C.Y."/>
            <person name="Krishnakumar V."/>
            <person name="Chan A.P."/>
            <person name="Thibaud-Nissen F."/>
            <person name="Schobel S."/>
            <person name="Town C.D."/>
        </authorList>
    </citation>
    <scope>GENOME REANNOTATION</scope>
    <source>
        <strain>cv. Columbia</strain>
    </source>
</reference>
<reference key="6">
    <citation type="journal article" date="2003" name="Science">
        <title>Empirical analysis of transcriptional activity in the Arabidopsis genome.</title>
        <authorList>
            <person name="Yamada K."/>
            <person name="Lim J."/>
            <person name="Dale J.M."/>
            <person name="Chen H."/>
            <person name="Shinn P."/>
            <person name="Palm C.J."/>
            <person name="Southwick A.M."/>
            <person name="Wu H.C."/>
            <person name="Kim C.J."/>
            <person name="Nguyen M."/>
            <person name="Pham P.K."/>
            <person name="Cheuk R.F."/>
            <person name="Karlin-Newmann G."/>
            <person name="Liu S.X."/>
            <person name="Lam B."/>
            <person name="Sakano H."/>
            <person name="Wu T."/>
            <person name="Yu G."/>
            <person name="Miranda M."/>
            <person name="Quach H.L."/>
            <person name="Tripp M."/>
            <person name="Chang C.H."/>
            <person name="Lee J.M."/>
            <person name="Toriumi M.J."/>
            <person name="Chan M.M."/>
            <person name="Tang C.C."/>
            <person name="Onodera C.S."/>
            <person name="Deng J.M."/>
            <person name="Akiyama K."/>
            <person name="Ansari Y."/>
            <person name="Arakawa T."/>
            <person name="Banh J."/>
            <person name="Banno F."/>
            <person name="Bowser L."/>
            <person name="Brooks S.Y."/>
            <person name="Carninci P."/>
            <person name="Chao Q."/>
            <person name="Choy N."/>
            <person name="Enju A."/>
            <person name="Goldsmith A.D."/>
            <person name="Gurjal M."/>
            <person name="Hansen N.F."/>
            <person name="Hayashizaki Y."/>
            <person name="Johnson-Hopson C."/>
            <person name="Hsuan V.W."/>
            <person name="Iida K."/>
            <person name="Karnes M."/>
            <person name="Khan S."/>
            <person name="Koesema E."/>
            <person name="Ishida J."/>
            <person name="Jiang P.X."/>
            <person name="Jones T."/>
            <person name="Kawai J."/>
            <person name="Kamiya A."/>
            <person name="Meyers C."/>
            <person name="Nakajima M."/>
            <person name="Narusaka M."/>
            <person name="Seki M."/>
            <person name="Sakurai T."/>
            <person name="Satou M."/>
            <person name="Tamse R."/>
            <person name="Vaysberg M."/>
            <person name="Wallender E.K."/>
            <person name="Wong C."/>
            <person name="Yamamura Y."/>
            <person name="Yuan S."/>
            <person name="Shinozaki K."/>
            <person name="Davis R.W."/>
            <person name="Theologis A."/>
            <person name="Ecker J.R."/>
        </authorList>
    </citation>
    <scope>NUCLEOTIDE SEQUENCE [LARGE SCALE MRNA]</scope>
    <source>
        <strain>cv. Columbia</strain>
    </source>
</reference>
<reference key="7">
    <citation type="journal article" date="2000" name="J. Plant Physiol.">
        <title>Purification and characterization of formate dehydrogenase from Arabidopsis thaliana.</title>
        <authorList>
            <person name="Li R."/>
            <person name="Ziola B."/>
            <person name="King J."/>
        </authorList>
    </citation>
    <scope>PROTEIN SEQUENCE OF 30-54</scope>
    <scope>CATALYTIC ACTIVITY</scope>
    <scope>BIOPHYSICOCHEMICAL PROPERTIES</scope>
    <scope>SUBCELLULAR LOCATION</scope>
    <scope>SUBUNIT</scope>
</reference>
<reference key="8">
    <citation type="journal article" date="2004" name="Plant Cell">
        <title>Experimental analysis of the Arabidopsis mitochondrial proteome highlights signaling and regulatory components, provides assessment of targeting prediction programs, and indicates plant-specific mitochondrial proteins.</title>
        <authorList>
            <person name="Heazlewood J.L."/>
            <person name="Tonti-Filippini J.S."/>
            <person name="Gout A.M."/>
            <person name="Day D.A."/>
            <person name="Whelan J."/>
            <person name="Millar A.H."/>
        </authorList>
    </citation>
    <scope>IDENTIFICATION BY MASS SPECTROMETRY</scope>
    <scope>SUBCELLULAR LOCATION [LARGE SCALE ANALYSIS]</scope>
    <source>
        <strain>cv. Landsberg erecta</strain>
    </source>
</reference>
<reference key="9">
    <citation type="submission" date="2009-09" db="PDB data bank">
        <title>Structure of recombinant formate dehydrogenase from Arabidopsis thaliana.</title>
        <authorList>
            <person name="Timofeev V.I."/>
            <person name="Shabalin I.G."/>
            <person name="Serov A.E."/>
            <person name="Polyakov K.M."/>
            <person name="Popov V.O."/>
            <person name="Tishkov V.I."/>
            <person name="Kuranova I.P."/>
            <person name="Samigina V.R."/>
        </authorList>
    </citation>
    <scope>X-RAY CRYSTALLOGRAPHY (1.30 ANGSTROMS) OF 34-384</scope>
</reference>
<reference key="10">
    <citation type="submission" date="2010-05" db="PDB data bank">
        <title>Structures of the apo and holo forms of NAD-dependent formate dehydrogenase from the higher-plant Arabidopsis thaliana.</title>
        <authorList>
            <person name="Shabalin I.G."/>
            <person name="Polyakov K.M."/>
            <person name="Skirgello O.E."/>
            <person name="Tishkov V.I."/>
            <person name="Popov V.O."/>
        </authorList>
    </citation>
    <scope>X-RAY CRYSTALLOGRAPHY (2.00 ANGSTROMS) OF 34-384 IN COMPLEX WITH NAD</scope>
</reference>
<name>FDH_ARATH</name>
<feature type="transit peptide" description="Chloroplast and mitochondrion" evidence="7">
    <location>
        <begin position="1"/>
        <end position="29"/>
    </location>
</feature>
<feature type="chain" id="PRO_0000007193" description="Formate dehydrogenase, chloroplastic/mitochondrial">
    <location>
        <begin position="30"/>
        <end position="384"/>
    </location>
</feature>
<feature type="binding site" evidence="1">
    <location>
        <position position="128"/>
    </location>
    <ligand>
        <name>substrate</name>
    </ligand>
</feature>
<feature type="binding site" evidence="1">
    <location>
        <position position="152"/>
    </location>
    <ligand>
        <name>substrate</name>
    </ligand>
</feature>
<feature type="binding site" evidence="1 5">
    <location>
        <begin position="207"/>
        <end position="208"/>
    </location>
    <ligand>
        <name>NAD(+)</name>
        <dbReference type="ChEBI" id="CHEBI:57540"/>
    </ligand>
</feature>
<feature type="binding site" evidence="1 5">
    <location>
        <position position="227"/>
    </location>
    <ligand>
        <name>NAD(+)</name>
        <dbReference type="ChEBI" id="CHEBI:57540"/>
    </ligand>
</feature>
<feature type="binding site" evidence="1 5">
    <location>
        <begin position="262"/>
        <end position="266"/>
    </location>
    <ligand>
        <name>NAD(+)</name>
        <dbReference type="ChEBI" id="CHEBI:57540"/>
    </ligand>
</feature>
<feature type="binding site" evidence="1 5">
    <location>
        <position position="288"/>
    </location>
    <ligand>
        <name>NAD(+)</name>
        <dbReference type="ChEBI" id="CHEBI:57540"/>
    </ligand>
</feature>
<feature type="binding site" evidence="1 5">
    <location>
        <position position="314"/>
    </location>
    <ligand>
        <name>NAD(+)</name>
        <dbReference type="ChEBI" id="CHEBI:57540"/>
    </ligand>
</feature>
<feature type="binding site" evidence="1 5">
    <location>
        <begin position="338"/>
        <end position="341"/>
    </location>
    <ligand>
        <name>NAD(+)</name>
        <dbReference type="ChEBI" id="CHEBI:57540"/>
    </ligand>
</feature>
<feature type="site" description="Important for catalytic activity" evidence="1">
    <location>
        <position position="290"/>
    </location>
</feature>
<feature type="site" description="Important for catalytic activity" evidence="1">
    <location>
        <position position="338"/>
    </location>
</feature>
<feature type="strand" evidence="10">
    <location>
        <begin position="37"/>
        <end position="41"/>
    </location>
</feature>
<feature type="helix" evidence="10">
    <location>
        <begin position="47"/>
        <end position="51"/>
    </location>
</feature>
<feature type="turn" evidence="10">
    <location>
        <begin position="59"/>
        <end position="61"/>
    </location>
</feature>
<feature type="helix" evidence="10">
    <location>
        <begin position="62"/>
        <end position="64"/>
    </location>
</feature>
<feature type="helix" evidence="10">
    <location>
        <begin position="66"/>
        <end position="71"/>
    </location>
</feature>
<feature type="strand" evidence="10">
    <location>
        <begin position="75"/>
        <end position="80"/>
    </location>
</feature>
<feature type="helix" evidence="10">
    <location>
        <begin position="88"/>
        <end position="92"/>
    </location>
</feature>
<feature type="turn" evidence="10">
    <location>
        <begin position="93"/>
        <end position="95"/>
    </location>
</feature>
<feature type="strand" evidence="10">
    <location>
        <begin position="97"/>
        <end position="101"/>
    </location>
</feature>
<feature type="helix" evidence="10">
    <location>
        <begin position="111"/>
        <end position="116"/>
    </location>
</feature>
<feature type="strand" evidence="10">
    <location>
        <begin position="122"/>
        <end position="128"/>
    </location>
</feature>
<feature type="helix" evidence="10">
    <location>
        <begin position="135"/>
        <end position="140"/>
    </location>
</feature>
<feature type="strand" evidence="10">
    <location>
        <begin position="144"/>
        <end position="147"/>
    </location>
</feature>
<feature type="turn" evidence="10">
    <location>
        <begin position="149"/>
        <end position="152"/>
    </location>
</feature>
<feature type="helix" evidence="10">
    <location>
        <begin position="153"/>
        <end position="169"/>
    </location>
</feature>
<feature type="helix" evidence="10">
    <location>
        <begin position="171"/>
        <end position="179"/>
    </location>
</feature>
<feature type="helix" evidence="10">
    <location>
        <begin position="185"/>
        <end position="189"/>
    </location>
</feature>
<feature type="strand" evidence="10">
    <location>
        <begin position="199"/>
        <end position="203"/>
    </location>
</feature>
<feature type="helix" evidence="10">
    <location>
        <begin position="207"/>
        <end position="216"/>
    </location>
</feature>
<feature type="helix" evidence="10">
    <location>
        <begin position="217"/>
        <end position="219"/>
    </location>
</feature>
<feature type="strand" evidence="10">
    <location>
        <begin position="222"/>
        <end position="226"/>
    </location>
</feature>
<feature type="helix" evidence="10">
    <location>
        <begin position="233"/>
        <end position="239"/>
    </location>
</feature>
<feature type="helix" evidence="10">
    <location>
        <begin position="247"/>
        <end position="250"/>
    </location>
</feature>
<feature type="helix" evidence="10">
    <location>
        <begin position="251"/>
        <end position="253"/>
    </location>
</feature>
<feature type="strand" evidence="10">
    <location>
        <begin position="255"/>
        <end position="259"/>
    </location>
</feature>
<feature type="turn" evidence="10">
    <location>
        <begin position="265"/>
        <end position="269"/>
    </location>
</feature>
<feature type="helix" evidence="10">
    <location>
        <begin position="273"/>
        <end position="278"/>
    </location>
</feature>
<feature type="strand" evidence="10">
    <location>
        <begin position="283"/>
        <end position="287"/>
    </location>
</feature>
<feature type="helix" evidence="10">
    <location>
        <begin position="291"/>
        <end position="293"/>
    </location>
</feature>
<feature type="helix" evidence="10">
    <location>
        <begin position="296"/>
        <end position="305"/>
    </location>
</feature>
<feature type="strand" evidence="10">
    <location>
        <begin position="306"/>
        <end position="314"/>
    </location>
</feature>
<feature type="strand" evidence="10">
    <location>
        <begin position="317"/>
        <end position="320"/>
    </location>
</feature>
<feature type="helix" evidence="10">
    <location>
        <begin position="326"/>
        <end position="328"/>
    </location>
</feature>
<feature type="helix" evidence="10">
    <location>
        <begin position="340"/>
        <end position="342"/>
    </location>
</feature>
<feature type="helix" evidence="10">
    <location>
        <begin position="344"/>
        <end position="363"/>
    </location>
</feature>
<feature type="helix" evidence="10">
    <location>
        <begin position="369"/>
        <end position="371"/>
    </location>
</feature>
<feature type="strand" evidence="10">
    <location>
        <begin position="372"/>
        <end position="375"/>
    </location>
</feature>
<feature type="helix" evidence="10">
    <location>
        <begin position="381"/>
        <end position="383"/>
    </location>
</feature>
<protein>
    <recommendedName>
        <fullName evidence="9">Formate dehydrogenase, chloroplastic/mitochondrial</fullName>
        <shortName evidence="1">FDH</shortName>
        <ecNumber evidence="1 2 7">1.17.1.9</ecNumber>
    </recommendedName>
    <alternativeName>
        <fullName evidence="1">NAD-dependent formate dehydrogenase</fullName>
    </alternativeName>
</protein>
<accession>Q9S7E4</accession>
<sequence>MAMRQAAKATIRACSSSSSSGYFARRQFNASSGDSKKIVGVFYKANEYATKNPNFLGCVENALGIRDWLESQGHQYIVTDDKEGPDCELEKHIPDLHVLISTPFHPAYVTAERIKKAKNLKLLLTAGIGSDHIDLQAAAAAGLTVAEVTGSNVVSVAEDELMRILILMRNFVPGYNQVVKGEWNVAGIAYRAYDLEGKTIGTVGAGRIGKLLLQRLKPFGCNLLYHDRLQMAPELEKETGAKFVEDLNEMLPKCDVIVINMPLTEKTRGMFNKELIGKLKKGVLIVNNARGAIMERQAVVDAVESGHIGGYSGDVWDPQPAPKDHPWRYMPNQAMTPHTSGTTIDAQLRYAAGTKDMLERYFKGEDFPTENYIVKDGELAPQYR</sequence>
<organism>
    <name type="scientific">Arabidopsis thaliana</name>
    <name type="common">Mouse-ear cress</name>
    <dbReference type="NCBI Taxonomy" id="3702"/>
    <lineage>
        <taxon>Eukaryota</taxon>
        <taxon>Viridiplantae</taxon>
        <taxon>Streptophyta</taxon>
        <taxon>Embryophyta</taxon>
        <taxon>Tracheophyta</taxon>
        <taxon>Spermatophyta</taxon>
        <taxon>Magnoliopsida</taxon>
        <taxon>eudicotyledons</taxon>
        <taxon>Gunneridae</taxon>
        <taxon>Pentapetalae</taxon>
        <taxon>rosids</taxon>
        <taxon>malvids</taxon>
        <taxon>Brassicales</taxon>
        <taxon>Brassicaceae</taxon>
        <taxon>Camelineae</taxon>
        <taxon>Arabidopsis</taxon>
    </lineage>
</organism>
<keyword id="KW-0002">3D-structure</keyword>
<keyword id="KW-0150">Chloroplast</keyword>
<keyword id="KW-0903">Direct protein sequencing</keyword>
<keyword id="KW-0496">Mitochondrion</keyword>
<keyword id="KW-0520">NAD</keyword>
<keyword id="KW-0560">Oxidoreductase</keyword>
<keyword id="KW-0934">Plastid</keyword>
<keyword id="KW-1185">Reference proteome</keyword>
<keyword id="KW-0809">Transit peptide</keyword>
<proteinExistence type="evidence at protein level"/>
<comment type="function">
    <text evidence="1 6">Catalyzes the NAD(+)-dependent oxidation of formate to carbon dioxide. Involved in the cell stress response.</text>
</comment>
<comment type="catalytic activity">
    <reaction evidence="1 2 7">
        <text>formate + NAD(+) = CO2 + NADH</text>
        <dbReference type="Rhea" id="RHEA:15985"/>
        <dbReference type="ChEBI" id="CHEBI:15740"/>
        <dbReference type="ChEBI" id="CHEBI:16526"/>
        <dbReference type="ChEBI" id="CHEBI:57540"/>
        <dbReference type="ChEBI" id="CHEBI:57945"/>
        <dbReference type="EC" id="1.17.1.9"/>
    </reaction>
</comment>
<comment type="biophysicochemical properties">
    <kinetics>
        <KM evidence="2">104 mM for formate(at pH 7 and 30 degrees Celsius)</KM>
        <KM evidence="7">1.4 mM for formate (at pH 7.5 and 25 degrees Celsius)</KM>
        <KM evidence="2">65 uM for NAD (at pH 7. and 30 degrees Celsius)</KM>
        <KM evidence="7">34 uM for NAD (at pH 7.5 and 25 degrees Celsius)</KM>
    </kinetics>
    <phDependence>
        <text evidence="7">Optimum pH is 6-8.</text>
    </phDependence>
</comment>
<comment type="subunit">
    <text evidence="1 7">Homodimer.</text>
</comment>
<comment type="subcellular location">
    <subcellularLocation>
        <location evidence="1 3 7">Mitochondrion</location>
    </subcellularLocation>
    <subcellularLocation>
        <location evidence="2">Plastid</location>
        <location evidence="2">Chloroplast</location>
    </subcellularLocation>
</comment>
<comment type="induction">
    <text evidence="4 6">By one-carbon metabolites, such as methanol, formaldehyde, and formate (at protein level) (Ref.3). Strongest induced by formaldehyde (PubMed:16232936).</text>
</comment>
<comment type="similarity">
    <text evidence="1">Belongs to the D-isomer specific 2-hydroxyacid dehydrogenase family. FDH subfamily.</text>
</comment>